<accession>Q66TN7</accession>
<comment type="function">
    <text evidence="3">Mediates gamete interaction by affecting the vitelline coat.</text>
</comment>
<comment type="catalytic activity">
    <reaction evidence="3">
        <text>Preferential cleavage at 371-Gly-Ser-Arg-|-Trp-374 of glycoprotein gp43 in Xenopus laevis coelemic egg envelope to yield gp41.</text>
        <dbReference type="EC" id="3.4.21.120"/>
    </reaction>
</comment>
<comment type="subcellular location">
    <subcellularLocation>
        <location evidence="2">Secreted</location>
    </subcellularLocation>
</comment>
<comment type="tissue specificity">
    <text evidence="8">Differentially expressed in the oviductal pars recta (PR) region.</text>
</comment>
<comment type="PTM">
    <text evidence="11">The catalytically inactive 108 kDa form is processed both N- and C-terminally to give rise to catalytically active and inactive forms.</text>
</comment>
<comment type="similarity">
    <text evidence="6">Belongs to the peptidase S1 family.</text>
</comment>
<sequence length="980" mass="108566">MAETSVFSIMMLTVMTAVGRGATDRPGRVSRCGERPSANASVTYNLLSRIVGGTSAVKGESPWMVSLKRDGKHFCGGTIISDKHVLTAAHCVLDKNIEYHVRVSIGDHDFTVYERSEQIFAIKAVFKHPNFNPIRPFNYDLAIVELGESIAFDKDIQPACLPSPDDVFPTGTLCIALGWGRLQENGRLPSSLQQVVLPLIEYRKCLSIMETVDRRLAFETVVCAGFPEGGKDACQGDSGGPFLCQRSQGRWVLVGVTSWGLGCARKWVDNILDPPERRGSPGVFTDIQRLLNWLSANLNQDKPDFPTYEVQCSTNDGIEKGTAGEILLPTDYRKYYSNNEKCIWTIIVPKGKHILLTFNSFNVEWDYSCDLDYLVIYSALGRLIGKFCGDVRPRPLLIADASVTLKFISDFQEYKTGFSLFYQAVEPNTYPDSDCGSVAVIFEEGEIQTMNHPHVYSSHANCQWVVHSPANHIIKITFLVFEVEPSEGCIFDRLVVYHDLQGTMVAGIFCGFSLPDPVLSVSNVMQITFTSDYSVNYLGFQAVISFVLPSSPVKSETQWKGNNQPRKNQDAMQHYEEGCGVSPLPPRFIHHNIIKAEEAMPNSWPWHVSINFGNKHLCNGAILSKTFVVTSANCVADREEFPSVGLIVAGLHDLESSTDAQKRTVEYVIVHPDYNRLSKDYDVALIHVQMPFQYNSHVQPICLPDGHSKLEPSKLCVVSGWDLNVELSTKLQQLEVPVLMDDVCKKYYDGITDRMFCAGVIAEEDNVSCLAQSGAPLVCQSDPGTYVIFGIVSWGVGCNEPPKAGVYSSVPLFIPWIMETILSVAGIANTDTEPHHPLIPPDKLSQEKALLPDSPPSNDSSSSQDIYVTCKDVMSLQSPGEIKLVASAQDGPEGGRCQLIFQAPEDHFILLHFKQLSHEHYSLIIYEGASSNKTFKAQLTEEKIPTIMKSVGPVITIEASSTAQDSALHLWLSYSFHNQN</sequence>
<name>OVCH2_RHIAE</name>
<dbReference type="EC" id="3.4.21.120" evidence="3"/>
<dbReference type="EMBL" id="AY704215">
    <property type="protein sequence ID" value="AAU11501.2"/>
    <property type="molecule type" value="mRNA"/>
</dbReference>
<dbReference type="SMR" id="Q66TN7"/>
<dbReference type="MEROPS" id="S01.240"/>
<dbReference type="GlyCosmos" id="Q66TN7">
    <property type="glycosylation" value="4 sites, No reported glycans"/>
</dbReference>
<dbReference type="BRENDA" id="3.4.21.120">
    <property type="organism ID" value="1018"/>
</dbReference>
<dbReference type="GO" id="GO:0005576">
    <property type="term" value="C:extracellular region"/>
    <property type="evidence" value="ECO:0007669"/>
    <property type="project" value="UniProtKB-SubCell"/>
</dbReference>
<dbReference type="GO" id="GO:0046872">
    <property type="term" value="F:metal ion binding"/>
    <property type="evidence" value="ECO:0007669"/>
    <property type="project" value="UniProtKB-KW"/>
</dbReference>
<dbReference type="GO" id="GO:0004252">
    <property type="term" value="F:serine-type endopeptidase activity"/>
    <property type="evidence" value="ECO:0007669"/>
    <property type="project" value="InterPro"/>
</dbReference>
<dbReference type="GO" id="GO:0006508">
    <property type="term" value="P:proteolysis"/>
    <property type="evidence" value="ECO:0007669"/>
    <property type="project" value="UniProtKB-KW"/>
</dbReference>
<dbReference type="CDD" id="cd00041">
    <property type="entry name" value="CUB"/>
    <property type="match status" value="3"/>
</dbReference>
<dbReference type="CDD" id="cd00190">
    <property type="entry name" value="Tryp_SPc"/>
    <property type="match status" value="2"/>
</dbReference>
<dbReference type="FunFam" id="2.40.10.10:FF:000054">
    <property type="entry name" value="Complement C1r subcomponent"/>
    <property type="match status" value="1"/>
</dbReference>
<dbReference type="FunFam" id="2.60.120.290:FF:000005">
    <property type="entry name" value="Procollagen C-endopeptidase enhancer 1"/>
    <property type="match status" value="2"/>
</dbReference>
<dbReference type="FunFam" id="2.40.10.10:FF:000068">
    <property type="entry name" value="transmembrane protease serine 2"/>
    <property type="match status" value="1"/>
</dbReference>
<dbReference type="FunFam" id="2.40.10.10:FF:000003">
    <property type="entry name" value="Transmembrane serine protease 3"/>
    <property type="match status" value="1"/>
</dbReference>
<dbReference type="Gene3D" id="2.60.120.290">
    <property type="entry name" value="Spermadhesin, CUB domain"/>
    <property type="match status" value="3"/>
</dbReference>
<dbReference type="Gene3D" id="2.40.10.10">
    <property type="entry name" value="Trypsin-like serine proteases"/>
    <property type="match status" value="2"/>
</dbReference>
<dbReference type="InterPro" id="IPR000859">
    <property type="entry name" value="CUB_dom"/>
</dbReference>
<dbReference type="InterPro" id="IPR009003">
    <property type="entry name" value="Peptidase_S1_PA"/>
</dbReference>
<dbReference type="InterPro" id="IPR043504">
    <property type="entry name" value="Peptidase_S1_PA_chymotrypsin"/>
</dbReference>
<dbReference type="InterPro" id="IPR001314">
    <property type="entry name" value="Peptidase_S1A"/>
</dbReference>
<dbReference type="InterPro" id="IPR035914">
    <property type="entry name" value="Sperma_CUB_dom_sf"/>
</dbReference>
<dbReference type="InterPro" id="IPR001254">
    <property type="entry name" value="Trypsin_dom"/>
</dbReference>
<dbReference type="InterPro" id="IPR018114">
    <property type="entry name" value="TRYPSIN_HIS"/>
</dbReference>
<dbReference type="InterPro" id="IPR033116">
    <property type="entry name" value="TRYPSIN_SER"/>
</dbReference>
<dbReference type="PANTHER" id="PTHR24252">
    <property type="entry name" value="ACROSIN-RELATED"/>
    <property type="match status" value="1"/>
</dbReference>
<dbReference type="PANTHER" id="PTHR24252:SF7">
    <property type="entry name" value="HYALIN"/>
    <property type="match status" value="1"/>
</dbReference>
<dbReference type="Pfam" id="PF00431">
    <property type="entry name" value="CUB"/>
    <property type="match status" value="2"/>
</dbReference>
<dbReference type="Pfam" id="PF00089">
    <property type="entry name" value="Trypsin"/>
    <property type="match status" value="2"/>
</dbReference>
<dbReference type="PRINTS" id="PR00722">
    <property type="entry name" value="CHYMOTRYPSIN"/>
</dbReference>
<dbReference type="SMART" id="SM00042">
    <property type="entry name" value="CUB"/>
    <property type="match status" value="2"/>
</dbReference>
<dbReference type="SMART" id="SM00020">
    <property type="entry name" value="Tryp_SPc"/>
    <property type="match status" value="2"/>
</dbReference>
<dbReference type="SUPFAM" id="SSF49854">
    <property type="entry name" value="Spermadhesin, CUB domain"/>
    <property type="match status" value="3"/>
</dbReference>
<dbReference type="SUPFAM" id="SSF50494">
    <property type="entry name" value="Trypsin-like serine proteases"/>
    <property type="match status" value="2"/>
</dbReference>
<dbReference type="PROSITE" id="PS01180">
    <property type="entry name" value="CUB"/>
    <property type="match status" value="2"/>
</dbReference>
<dbReference type="PROSITE" id="PS50240">
    <property type="entry name" value="TRYPSIN_DOM"/>
    <property type="match status" value="2"/>
</dbReference>
<dbReference type="PROSITE" id="PS00134">
    <property type="entry name" value="TRYPSIN_HIS"/>
    <property type="match status" value="1"/>
</dbReference>
<dbReference type="PROSITE" id="PS00135">
    <property type="entry name" value="TRYPSIN_SER"/>
    <property type="match status" value="1"/>
</dbReference>
<keyword id="KW-0106">Calcium</keyword>
<keyword id="KW-1015">Disulfide bond</keyword>
<keyword id="KW-0325">Glycoprotein</keyword>
<keyword id="KW-0378">Hydrolase</keyword>
<keyword id="KW-0479">Metal-binding</keyword>
<keyword id="KW-0645">Protease</keyword>
<keyword id="KW-0677">Repeat</keyword>
<keyword id="KW-0964">Secreted</keyword>
<keyword id="KW-0720">Serine protease</keyword>
<keyword id="KW-0732">Signal</keyword>
<keyword id="KW-0865">Zymogen</keyword>
<proteinExistence type="evidence at transcript level"/>
<gene>
    <name type="primary">OVCH2</name>
    <name type="synonym">OVTN</name>
</gene>
<protein>
    <recommendedName>
        <fullName evidence="10">Ovochymase-2</fullName>
        <ecNumber evidence="3">3.4.21.120</ecNumber>
    </recommendedName>
    <alternativeName>
        <fullName>Oviductal protease</fullName>
    </alternativeName>
    <alternativeName>
        <fullName evidence="9">Oviductin</fullName>
    </alternativeName>
</protein>
<organism>
    <name type="scientific">Rhinella arenarum</name>
    <name type="common">Argentine common toad</name>
    <name type="synonym">Bufo arenarum</name>
    <dbReference type="NCBI Taxonomy" id="38577"/>
    <lineage>
        <taxon>Eukaryota</taxon>
        <taxon>Metazoa</taxon>
        <taxon>Chordata</taxon>
        <taxon>Craniata</taxon>
        <taxon>Vertebrata</taxon>
        <taxon>Euteleostomi</taxon>
        <taxon>Amphibia</taxon>
        <taxon>Batrachia</taxon>
        <taxon>Anura</taxon>
        <taxon>Neobatrachia</taxon>
        <taxon>Hyloidea</taxon>
        <taxon>Bufonidae</taxon>
        <taxon>Rhinella</taxon>
    </lineage>
</organism>
<reference key="1">
    <citation type="journal article" date="2012" name="Zygote">
        <title>Cloning and sequence analysis of Bufo arenarum oviductin cDNA and detection of its orthologous gene expression in the mouse female reproductive tract.</title>
        <authorList>
            <person name="Barrera D."/>
            <person name="Valdecantos P.A."/>
            <person name="Garcia E.V."/>
            <person name="Miceli D.C."/>
        </authorList>
    </citation>
    <scope>NUCLEOTIDE SEQUENCE [MRNA]</scope>
    <scope>TISSUE SPECIFICITY</scope>
</reference>
<feature type="signal peptide" evidence="4">
    <location>
        <begin position="1"/>
        <end position="21"/>
    </location>
</feature>
<feature type="propeptide" id="PRO_0000261185" description="Activation peptide" evidence="1">
    <location>
        <begin position="22"/>
        <end position="49"/>
    </location>
</feature>
<feature type="chain" id="PRO_0000261186" description="Ovochymase-2">
    <location>
        <begin position="50"/>
        <end position="592"/>
    </location>
</feature>
<feature type="propeptide" id="PRO_0000261187" description="Activation peptide" evidence="1">
    <location>
        <begin position="593"/>
        <end position="980"/>
    </location>
</feature>
<feature type="domain" description="Peptidase S1 1" evidence="6">
    <location>
        <begin position="50"/>
        <end position="299"/>
    </location>
</feature>
<feature type="domain" description="CUB 1" evidence="5">
    <location>
        <begin position="312"/>
        <end position="425"/>
    </location>
</feature>
<feature type="domain" description="CUB 2" evidence="5">
    <location>
        <begin position="435"/>
        <end position="547"/>
    </location>
</feature>
<feature type="domain" description="Peptidase S1 2" evidence="6">
    <location>
        <begin position="593"/>
        <end position="822"/>
    </location>
</feature>
<feature type="region of interest" description="Disordered" evidence="7">
    <location>
        <begin position="835"/>
        <end position="863"/>
    </location>
</feature>
<feature type="active site" description="Charge relay system" evidence="1">
    <location>
        <position position="90"/>
    </location>
</feature>
<feature type="active site" description="Charge relay system" evidence="1">
    <location>
        <position position="140"/>
    </location>
</feature>
<feature type="active site" description="Charge relay system" evidence="1">
    <location>
        <position position="238"/>
    </location>
</feature>
<feature type="binding site" evidence="1">
    <location>
        <position position="112"/>
    </location>
    <ligand>
        <name>Ca(2+)</name>
        <dbReference type="ChEBI" id="CHEBI:29108"/>
    </ligand>
</feature>
<feature type="binding site" evidence="1">
    <location>
        <position position="117"/>
    </location>
    <ligand>
        <name>Ca(2+)</name>
        <dbReference type="ChEBI" id="CHEBI:29108"/>
    </ligand>
</feature>
<feature type="glycosylation site" description="N-linked (GlcNAc...) asparagine" evidence="4">
    <location>
        <position position="39"/>
    </location>
</feature>
<feature type="glycosylation site" description="N-linked (GlcNAc...) asparagine" evidence="4">
    <location>
        <position position="766"/>
    </location>
</feature>
<feature type="glycosylation site" description="N-linked (GlcNAc...) asparagine" evidence="4">
    <location>
        <position position="858"/>
    </location>
</feature>
<feature type="glycosylation site" description="N-linked (GlcNAc...) asparagine" evidence="4">
    <location>
        <position position="932"/>
    </location>
</feature>
<feature type="disulfide bond" evidence="1">
    <location>
        <begin position="75"/>
        <end position="91"/>
    </location>
</feature>
<feature type="disulfide bond" evidence="1">
    <location>
        <begin position="174"/>
        <end position="244"/>
    </location>
</feature>
<feature type="disulfide bond" evidence="1">
    <location>
        <begin position="205"/>
        <end position="223"/>
    </location>
</feature>
<feature type="disulfide bond" evidence="1">
    <location>
        <begin position="234"/>
        <end position="263"/>
    </location>
</feature>
<feature type="disulfide bond" evidence="1">
    <location>
        <begin position="312"/>
        <end position="342"/>
    </location>
</feature>
<feature type="disulfide bond" evidence="1">
    <location>
        <begin position="369"/>
        <end position="388"/>
    </location>
</feature>
<feature type="disulfide bond" evidence="1">
    <location>
        <begin position="435"/>
        <end position="462"/>
    </location>
</feature>
<feature type="disulfide bond" evidence="1">
    <location>
        <begin position="489"/>
        <end position="510"/>
    </location>
</feature>
<feature type="disulfide bond" evidence="1">
    <location>
        <begin position="618"/>
        <end position="634"/>
    </location>
</feature>
<feature type="disulfide bond" evidence="1">
    <location>
        <begin position="716"/>
        <end position="779"/>
    </location>
</feature>
<feature type="disulfide bond" evidence="1">
    <location>
        <begin position="744"/>
        <end position="757"/>
    </location>
</feature>
<feature type="disulfide bond" evidence="1">
    <location>
        <begin position="769"/>
        <end position="798"/>
    </location>
</feature>
<evidence type="ECO:0000250" key="1"/>
<evidence type="ECO:0000250" key="2">
    <source>
        <dbReference type="UniProtKB" id="P79953"/>
    </source>
</evidence>
<evidence type="ECO:0000250" key="3">
    <source>
        <dbReference type="UniProtKB" id="Q90WD8"/>
    </source>
</evidence>
<evidence type="ECO:0000255" key="4"/>
<evidence type="ECO:0000255" key="5">
    <source>
        <dbReference type="PROSITE-ProRule" id="PRU00059"/>
    </source>
</evidence>
<evidence type="ECO:0000255" key="6">
    <source>
        <dbReference type="PROSITE-ProRule" id="PRU00274"/>
    </source>
</evidence>
<evidence type="ECO:0000256" key="7">
    <source>
        <dbReference type="SAM" id="MobiDB-lite"/>
    </source>
</evidence>
<evidence type="ECO:0000269" key="8">
    <source>
    </source>
</evidence>
<evidence type="ECO:0000303" key="9">
    <source>
    </source>
</evidence>
<evidence type="ECO:0000305" key="10"/>
<evidence type="ECO:0000305" key="11">
    <source>
    </source>
</evidence>